<sequence length="350" mass="40133">MFCCLGYEWLSGGCKTWHSAWVINTLADHRHRGTDFGGSPWLLIITVFLRSYKFAISLCTSYLCVSFLKTIFPSQNGHDGSTDVQQRARRSNRRRQEGIKIVLEDIFTLWRQVETKVRAKIRKMKVTTKVNRHDKINGKRKTAKEHLRKLSMKEREHGEKERQVSEAEENGKLDMKEIHTYMEMFQRAQALRRRAEDYYRCKITPSARKPLCNRVRMAAVEHRHSSGLPYWPYLTAETLKNRMGHQPPPPTQQHSIIDNSLSLKTPSECLLTPLPPSALPSADDNLKTPAECLLYPLPPSADDNLKTPPECLLTPLPPSAPPSVDDNLKTPPECVCSLPFHPQRMIISRN</sequence>
<name>NPIA1_HUMAN</name>
<accession>Q9UND3</accession>
<accession>O15102</accession>
<proteinExistence type="evidence at transcript level"/>
<dbReference type="EMBL" id="AF132984">
    <property type="protein sequence ID" value="AAD34394.1"/>
    <property type="molecule type" value="mRNA"/>
</dbReference>
<dbReference type="EMBL" id="AC002045">
    <property type="protein sequence ID" value="AAC05438.1"/>
    <property type="molecule type" value="Genomic_DNA"/>
</dbReference>
<dbReference type="EMBL" id="AC138932">
    <property type="status" value="NOT_ANNOTATED_CDS"/>
    <property type="molecule type" value="Genomic_DNA"/>
</dbReference>
<dbReference type="CCDS" id="CCDS10557.1"/>
<dbReference type="RefSeq" id="NP_001264253.1">
    <property type="nucleotide sequence ID" value="NM_001277324.1"/>
</dbReference>
<dbReference type="RefSeq" id="NP_008916.2">
    <property type="nucleotide sequence ID" value="NM_006985.4"/>
</dbReference>
<dbReference type="RefSeq" id="XP_005255546.1">
    <property type="nucleotide sequence ID" value="XM_005255489.3"/>
</dbReference>
<dbReference type="RefSeq" id="XP_011521051.1">
    <property type="nucleotide sequence ID" value="XM_011522749.2"/>
</dbReference>
<dbReference type="SMR" id="Q9UND3"/>
<dbReference type="BioGRID" id="114701">
    <property type="interactions" value="4"/>
</dbReference>
<dbReference type="BioGRID" id="568253">
    <property type="interactions" value="1"/>
</dbReference>
<dbReference type="BioGRID" id="568266">
    <property type="interactions" value="2"/>
</dbReference>
<dbReference type="FunCoup" id="Q9UND3">
    <property type="interactions" value="9"/>
</dbReference>
<dbReference type="IntAct" id="Q9UND3">
    <property type="interactions" value="1"/>
</dbReference>
<dbReference type="STRING" id="9606.ENSP00000331843"/>
<dbReference type="TCDB" id="1.I.1.1.3">
    <property type="family name" value="the nuclear pore complex (npc) family"/>
</dbReference>
<dbReference type="GlyGen" id="Q9UND3">
    <property type="glycosylation" value="1 site"/>
</dbReference>
<dbReference type="iPTMnet" id="Q9UND3"/>
<dbReference type="PhosphoSitePlus" id="Q9UND3"/>
<dbReference type="BioMuta" id="NPIPA1"/>
<dbReference type="DMDM" id="238054371"/>
<dbReference type="MassIVE" id="Q9UND3"/>
<dbReference type="PaxDb" id="9606-ENSP00000331843"/>
<dbReference type="PeptideAtlas" id="Q9UND3"/>
<dbReference type="Antibodypedia" id="24922">
    <property type="antibodies" value="33 antibodies from 13 providers"/>
</dbReference>
<dbReference type="DNASU" id="9284"/>
<dbReference type="Ensembl" id="ENST00000328085.10">
    <property type="protein sequence ID" value="ENSP00000331843.6"/>
    <property type="gene ID" value="ENSG00000183426.17"/>
</dbReference>
<dbReference type="GeneID" id="642799"/>
<dbReference type="GeneID" id="9284"/>
<dbReference type="KEGG" id="hsa:642799"/>
<dbReference type="KEGG" id="hsa:9284"/>
<dbReference type="MANE-Select" id="ENST00000328085.10">
    <property type="protein sequence ID" value="ENSP00000331843.6"/>
    <property type="RefSeq nucleotide sequence ID" value="NM_006985.4"/>
    <property type="RefSeq protein sequence ID" value="NP_008916.2"/>
</dbReference>
<dbReference type="UCSC" id="uc002dcy.5">
    <property type="organism name" value="human"/>
</dbReference>
<dbReference type="AGR" id="HGNC:41979"/>
<dbReference type="AGR" id="HGNC:7909"/>
<dbReference type="CTD" id="642799"/>
<dbReference type="CTD" id="9284"/>
<dbReference type="DisGeNET" id="642799"/>
<dbReference type="DisGeNET" id="9284"/>
<dbReference type="GeneCards" id="NPIPA1"/>
<dbReference type="HGNC" id="HGNC:7909">
    <property type="gene designation" value="NPIPA1"/>
</dbReference>
<dbReference type="HPA" id="ENSG00000183426">
    <property type="expression patterns" value="Tissue enhanced (brain)"/>
</dbReference>
<dbReference type="MIM" id="606406">
    <property type="type" value="gene"/>
</dbReference>
<dbReference type="neXtProt" id="NX_Q9UND3"/>
<dbReference type="OpenTargets" id="ENSG00000183426"/>
<dbReference type="PharmGKB" id="PA31711"/>
<dbReference type="VEuPathDB" id="HostDB:ENSG00000183426"/>
<dbReference type="eggNOG" id="ENOG502R1NR">
    <property type="taxonomic scope" value="Eukaryota"/>
</dbReference>
<dbReference type="GeneTree" id="ENSGT00540000072033"/>
<dbReference type="HOGENOM" id="CLU_059939_0_0_1"/>
<dbReference type="InParanoid" id="Q9UND3"/>
<dbReference type="OrthoDB" id="17754at314295"/>
<dbReference type="PAN-GO" id="Q9UND3">
    <property type="GO annotations" value="1 GO annotation based on evolutionary models"/>
</dbReference>
<dbReference type="PhylomeDB" id="Q9UND3"/>
<dbReference type="TreeFam" id="TF333389"/>
<dbReference type="PathwayCommons" id="Q9UND3"/>
<dbReference type="SignaLink" id="Q9UND3"/>
<dbReference type="BioGRID-ORCS" id="642799">
    <property type="hits" value="18 hits in 219 CRISPR screens"/>
</dbReference>
<dbReference type="BioGRID-ORCS" id="9284">
    <property type="hits" value="358 hits in 561 CRISPR screens"/>
</dbReference>
<dbReference type="Pharos" id="Q9UND3">
    <property type="development level" value="Tdark"/>
</dbReference>
<dbReference type="PRO" id="PR:Q9UND3"/>
<dbReference type="Proteomes" id="UP000005640">
    <property type="component" value="Chromosome 16"/>
</dbReference>
<dbReference type="RNAct" id="Q9UND3">
    <property type="molecule type" value="protein"/>
</dbReference>
<dbReference type="Bgee" id="ENSG00000183426">
    <property type="expression patterns" value="Expressed in right hemisphere of cerebellum and 97 other cell types or tissues"/>
</dbReference>
<dbReference type="ExpressionAtlas" id="Q9UND3">
    <property type="expression patterns" value="baseline and differential"/>
</dbReference>
<dbReference type="GO" id="GO:0031965">
    <property type="term" value="C:nuclear membrane"/>
    <property type="evidence" value="ECO:0007669"/>
    <property type="project" value="UniProtKB-SubCell"/>
</dbReference>
<dbReference type="GO" id="GO:0005643">
    <property type="term" value="C:nuclear pore"/>
    <property type="evidence" value="ECO:0007669"/>
    <property type="project" value="UniProtKB-SubCell"/>
</dbReference>
<dbReference type="GO" id="GO:0051028">
    <property type="term" value="P:mRNA transport"/>
    <property type="evidence" value="ECO:0007669"/>
    <property type="project" value="UniProtKB-KW"/>
</dbReference>
<dbReference type="GO" id="GO:0015031">
    <property type="term" value="P:protein transport"/>
    <property type="evidence" value="ECO:0007669"/>
    <property type="project" value="UniProtKB-KW"/>
</dbReference>
<dbReference type="InterPro" id="IPR009443">
    <property type="entry name" value="NPIP"/>
</dbReference>
<dbReference type="InterPro" id="IPR054697">
    <property type="entry name" value="NPIP_N"/>
</dbReference>
<dbReference type="PANTHER" id="PTHR15438">
    <property type="entry name" value="NUCLEAR PORE COMPLEX INTERACTING PROTEIN"/>
    <property type="match status" value="1"/>
</dbReference>
<dbReference type="PANTHER" id="PTHR15438:SF14">
    <property type="entry name" value="NUCLEAR PORE COMPLEX-INTERACTING PROTEIN FAMILY MEMBER A1-RELATED"/>
    <property type="match status" value="1"/>
</dbReference>
<dbReference type="Pfam" id="PF06409">
    <property type="entry name" value="NPIP"/>
    <property type="match status" value="1"/>
</dbReference>
<organism>
    <name type="scientific">Homo sapiens</name>
    <name type="common">Human</name>
    <dbReference type="NCBI Taxonomy" id="9606"/>
    <lineage>
        <taxon>Eukaryota</taxon>
        <taxon>Metazoa</taxon>
        <taxon>Chordata</taxon>
        <taxon>Craniata</taxon>
        <taxon>Vertebrata</taxon>
        <taxon>Euteleostomi</taxon>
        <taxon>Mammalia</taxon>
        <taxon>Eutheria</taxon>
        <taxon>Euarchontoglires</taxon>
        <taxon>Primates</taxon>
        <taxon>Haplorrhini</taxon>
        <taxon>Catarrhini</taxon>
        <taxon>Hominidae</taxon>
        <taxon>Homo</taxon>
    </lineage>
</organism>
<comment type="subunit">
    <text>May associate with the nuclear pore complex.</text>
</comment>
<comment type="subcellular location">
    <subcellularLocation>
        <location evidence="2">Nucleus</location>
        <location evidence="2">Nuclear pore complex</location>
    </subcellularLocation>
    <subcellularLocation>
        <location evidence="2">Nucleus membrane</location>
    </subcellularLocation>
    <text>Colocalizes with nuclear pore complex protein NUP62.</text>
</comment>
<comment type="tissue specificity">
    <text evidence="2">Widely expressed.</text>
</comment>
<comment type="similarity">
    <text evidence="3">Belongs to the NPIP family.</text>
</comment>
<evidence type="ECO:0000256" key="1">
    <source>
        <dbReference type="SAM" id="MobiDB-lite"/>
    </source>
</evidence>
<evidence type="ECO:0000269" key="2">
    <source>
    </source>
</evidence>
<evidence type="ECO:0000305" key="3"/>
<protein>
    <recommendedName>
        <fullName>Nuclear pore complex-interacting protein family member A1</fullName>
    </recommendedName>
    <alternativeName>
        <fullName>Nuclear pore complex-interacting protein</fullName>
        <shortName>NPIP</shortName>
    </alternativeName>
</protein>
<keyword id="KW-0472">Membrane</keyword>
<keyword id="KW-0509">mRNA transport</keyword>
<keyword id="KW-0906">Nuclear pore complex</keyword>
<keyword id="KW-0539">Nucleus</keyword>
<keyword id="KW-0653">Protein transport</keyword>
<keyword id="KW-1185">Reference proteome</keyword>
<keyword id="KW-0811">Translocation</keyword>
<keyword id="KW-0813">Transport</keyword>
<gene>
    <name type="primary">NPIPA1</name>
    <name type="synonym">NPIP</name>
</gene>
<reference key="1">
    <citation type="journal article" date="2001" name="Nature">
        <title>Positive selection of a gene family during the emergence of humans and African apes.</title>
        <authorList>
            <person name="Johnson M.E."/>
            <person name="Viggiano L."/>
            <person name="Bailey J.A."/>
            <person name="Abdul-Rauf M."/>
            <person name="Goodwin G."/>
            <person name="Rocchi M."/>
            <person name="Eichler E.E."/>
        </authorList>
    </citation>
    <scope>NUCLEOTIDE SEQUENCE [MRNA]</scope>
    <scope>SUBCELLULAR LOCATION</scope>
    <scope>TISSUE SPECIFICITY</scope>
</reference>
<reference key="2">
    <citation type="journal article" date="1999" name="Genomics">
        <title>Genome duplications and other features in 12 Mb of DNA sequence from human chromosome 16p and 16q.</title>
        <authorList>
            <person name="Loftus B.J."/>
            <person name="Kim U.-J."/>
            <person name="Sneddon V.P."/>
            <person name="Kalush F."/>
            <person name="Brandon R."/>
            <person name="Fuhrmann J."/>
            <person name="Mason T."/>
            <person name="Crosby M.L."/>
            <person name="Barnstead M."/>
            <person name="Cronin L."/>
            <person name="Mays A.D."/>
            <person name="Cao Y."/>
            <person name="Xu R.X."/>
            <person name="Kang H.-L."/>
            <person name="Mitchell S."/>
            <person name="Eichler E.E."/>
            <person name="Harris P.C."/>
            <person name="Venter J.C."/>
            <person name="Adams M.D."/>
        </authorList>
    </citation>
    <scope>NUCLEOTIDE SEQUENCE [LARGE SCALE GENOMIC DNA]</scope>
</reference>
<reference key="3">
    <citation type="journal article" date="2004" name="Nature">
        <title>The sequence and analysis of duplication-rich human chromosome 16.</title>
        <authorList>
            <person name="Martin J."/>
            <person name="Han C."/>
            <person name="Gordon L.A."/>
            <person name="Terry A."/>
            <person name="Prabhakar S."/>
            <person name="She X."/>
            <person name="Xie G."/>
            <person name="Hellsten U."/>
            <person name="Chan Y.M."/>
            <person name="Altherr M."/>
            <person name="Couronne O."/>
            <person name="Aerts A."/>
            <person name="Bajorek E."/>
            <person name="Black S."/>
            <person name="Blumer H."/>
            <person name="Branscomb E."/>
            <person name="Brown N.C."/>
            <person name="Bruno W.J."/>
            <person name="Buckingham J.M."/>
            <person name="Callen D.F."/>
            <person name="Campbell C.S."/>
            <person name="Campbell M.L."/>
            <person name="Campbell E.W."/>
            <person name="Caoile C."/>
            <person name="Challacombe J.F."/>
            <person name="Chasteen L.A."/>
            <person name="Chertkov O."/>
            <person name="Chi H.C."/>
            <person name="Christensen M."/>
            <person name="Clark L.M."/>
            <person name="Cohn J.D."/>
            <person name="Denys M."/>
            <person name="Detter J.C."/>
            <person name="Dickson M."/>
            <person name="Dimitrijevic-Bussod M."/>
            <person name="Escobar J."/>
            <person name="Fawcett J.J."/>
            <person name="Flowers D."/>
            <person name="Fotopulos D."/>
            <person name="Glavina T."/>
            <person name="Gomez M."/>
            <person name="Gonzales E."/>
            <person name="Goodstein D."/>
            <person name="Goodwin L.A."/>
            <person name="Grady D.L."/>
            <person name="Grigoriev I."/>
            <person name="Groza M."/>
            <person name="Hammon N."/>
            <person name="Hawkins T."/>
            <person name="Haydu L."/>
            <person name="Hildebrand C.E."/>
            <person name="Huang W."/>
            <person name="Israni S."/>
            <person name="Jett J."/>
            <person name="Jewett P.B."/>
            <person name="Kadner K."/>
            <person name="Kimball H."/>
            <person name="Kobayashi A."/>
            <person name="Krawczyk M.-C."/>
            <person name="Leyba T."/>
            <person name="Longmire J.L."/>
            <person name="Lopez F."/>
            <person name="Lou Y."/>
            <person name="Lowry S."/>
            <person name="Ludeman T."/>
            <person name="Manohar C.F."/>
            <person name="Mark G.A."/>
            <person name="McMurray K.L."/>
            <person name="Meincke L.J."/>
            <person name="Morgan J."/>
            <person name="Moyzis R.K."/>
            <person name="Mundt M.O."/>
            <person name="Munk A.C."/>
            <person name="Nandkeshwar R.D."/>
            <person name="Pitluck S."/>
            <person name="Pollard M."/>
            <person name="Predki P."/>
            <person name="Parson-Quintana B."/>
            <person name="Ramirez L."/>
            <person name="Rash S."/>
            <person name="Retterer J."/>
            <person name="Ricke D.O."/>
            <person name="Robinson D.L."/>
            <person name="Rodriguez A."/>
            <person name="Salamov A."/>
            <person name="Saunders E.H."/>
            <person name="Scott D."/>
            <person name="Shough T."/>
            <person name="Stallings R.L."/>
            <person name="Stalvey M."/>
            <person name="Sutherland R.D."/>
            <person name="Tapia R."/>
            <person name="Tesmer J.G."/>
            <person name="Thayer N."/>
            <person name="Thompson L.S."/>
            <person name="Tice H."/>
            <person name="Torney D.C."/>
            <person name="Tran-Gyamfi M."/>
            <person name="Tsai M."/>
            <person name="Ulanovsky L.E."/>
            <person name="Ustaszewska A."/>
            <person name="Vo N."/>
            <person name="White P.S."/>
            <person name="Williams A.L."/>
            <person name="Wills P.L."/>
            <person name="Wu J.-R."/>
            <person name="Wu K."/>
            <person name="Yang J."/>
            <person name="DeJong P."/>
            <person name="Bruce D."/>
            <person name="Doggett N.A."/>
            <person name="Deaven L."/>
            <person name="Schmutz J."/>
            <person name="Grimwood J."/>
            <person name="Richardson P."/>
            <person name="Rokhsar D.S."/>
            <person name="Eichler E.E."/>
            <person name="Gilna P."/>
            <person name="Lucas S.M."/>
            <person name="Myers R.M."/>
            <person name="Rubin E.M."/>
            <person name="Pennacchio L.A."/>
        </authorList>
    </citation>
    <scope>NUCLEOTIDE SEQUENCE [LARGE SCALE GENOMIC DNA]</scope>
</reference>
<feature type="chain" id="PRO_0000076275" description="Nuclear pore complex-interacting protein family member A1">
    <location>
        <begin position="1"/>
        <end position="350"/>
    </location>
</feature>
<feature type="region of interest" description="Disordered" evidence="1">
    <location>
        <begin position="306"/>
        <end position="325"/>
    </location>
</feature>
<feature type="sequence variant" id="VAR_034141" description="In dbSNP:rs1136474.">
    <original>R</original>
    <variation>C</variation>
    <location>
        <position position="93"/>
    </location>
</feature>
<feature type="sequence conflict" description="In Ref. 1; AAD34394." evidence="3" ref="1">
    <original>S</original>
    <variation>T</variation>
    <location>
        <position position="61"/>
    </location>
</feature>
<feature type="sequence conflict" description="In Ref. 2; AAC05438." evidence="3" ref="2">
    <original>R</original>
    <variation>C</variation>
    <location>
        <position position="122"/>
    </location>
</feature>
<feature type="sequence conflict" description="In Ref. 2; AAC05438." evidence="3" ref="2">
    <original>V</original>
    <variation>A</variation>
    <location>
        <position position="220"/>
    </location>
</feature>
<feature type="sequence conflict" description="In Ref. 2; AAC05438." evidence="3" ref="2">
    <original>S</original>
    <variation>P</variation>
    <location>
        <position position="267"/>
    </location>
</feature>
<feature type="sequence conflict" description="In Ref. 1; AAD34394 and 2; AAC05438." evidence="3" ref="1 2">
    <original>V</original>
    <variation>A</variation>
    <location>
        <position position="324"/>
    </location>
</feature>
<feature type="sequence conflict" description="In Ref. 2; AAC05438." evidence="3" ref="2">
    <original>E</original>
    <variation>K</variation>
    <location>
        <position position="333"/>
    </location>
</feature>